<accession>Q5X852</accession>
<dbReference type="EMBL" id="CR628336">
    <property type="protein sequence ID" value="CAH11549.1"/>
    <property type="molecule type" value="Genomic_DNA"/>
</dbReference>
<dbReference type="RefSeq" id="WP_010946085.1">
    <property type="nucleotide sequence ID" value="NC_006368.1"/>
</dbReference>
<dbReference type="SMR" id="Q5X852"/>
<dbReference type="GeneID" id="57034339"/>
<dbReference type="KEGG" id="lpp:lpp0401"/>
<dbReference type="LegioList" id="lpp0401"/>
<dbReference type="HOGENOM" id="CLU_078858_2_1_6"/>
<dbReference type="GO" id="GO:0022625">
    <property type="term" value="C:cytosolic large ribosomal subunit"/>
    <property type="evidence" value="ECO:0007669"/>
    <property type="project" value="TreeGrafter"/>
</dbReference>
<dbReference type="GO" id="GO:0019843">
    <property type="term" value="F:rRNA binding"/>
    <property type="evidence" value="ECO:0007669"/>
    <property type="project" value="UniProtKB-UniRule"/>
</dbReference>
<dbReference type="GO" id="GO:0003735">
    <property type="term" value="F:structural constituent of ribosome"/>
    <property type="evidence" value="ECO:0007669"/>
    <property type="project" value="InterPro"/>
</dbReference>
<dbReference type="GO" id="GO:0000049">
    <property type="term" value="F:tRNA binding"/>
    <property type="evidence" value="ECO:0007669"/>
    <property type="project" value="UniProtKB-KW"/>
</dbReference>
<dbReference type="GO" id="GO:0006412">
    <property type="term" value="P:translation"/>
    <property type="evidence" value="ECO:0007669"/>
    <property type="project" value="UniProtKB-UniRule"/>
</dbReference>
<dbReference type="CDD" id="cd01433">
    <property type="entry name" value="Ribosomal_L16_L10e"/>
    <property type="match status" value="1"/>
</dbReference>
<dbReference type="FunFam" id="3.90.1170.10:FF:000001">
    <property type="entry name" value="50S ribosomal protein L16"/>
    <property type="match status" value="1"/>
</dbReference>
<dbReference type="Gene3D" id="3.90.1170.10">
    <property type="entry name" value="Ribosomal protein L10e/L16"/>
    <property type="match status" value="1"/>
</dbReference>
<dbReference type="HAMAP" id="MF_01342">
    <property type="entry name" value="Ribosomal_uL16"/>
    <property type="match status" value="1"/>
</dbReference>
<dbReference type="InterPro" id="IPR047873">
    <property type="entry name" value="Ribosomal_uL16"/>
</dbReference>
<dbReference type="InterPro" id="IPR000114">
    <property type="entry name" value="Ribosomal_uL16_bact-type"/>
</dbReference>
<dbReference type="InterPro" id="IPR020798">
    <property type="entry name" value="Ribosomal_uL16_CS"/>
</dbReference>
<dbReference type="InterPro" id="IPR016180">
    <property type="entry name" value="Ribosomal_uL16_dom"/>
</dbReference>
<dbReference type="InterPro" id="IPR036920">
    <property type="entry name" value="Ribosomal_uL16_sf"/>
</dbReference>
<dbReference type="NCBIfam" id="TIGR01164">
    <property type="entry name" value="rplP_bact"/>
    <property type="match status" value="1"/>
</dbReference>
<dbReference type="PANTHER" id="PTHR12220">
    <property type="entry name" value="50S/60S RIBOSOMAL PROTEIN L16"/>
    <property type="match status" value="1"/>
</dbReference>
<dbReference type="PANTHER" id="PTHR12220:SF13">
    <property type="entry name" value="LARGE RIBOSOMAL SUBUNIT PROTEIN UL16M"/>
    <property type="match status" value="1"/>
</dbReference>
<dbReference type="Pfam" id="PF00252">
    <property type="entry name" value="Ribosomal_L16"/>
    <property type="match status" value="1"/>
</dbReference>
<dbReference type="PRINTS" id="PR00060">
    <property type="entry name" value="RIBOSOMALL16"/>
</dbReference>
<dbReference type="SUPFAM" id="SSF54686">
    <property type="entry name" value="Ribosomal protein L16p/L10e"/>
    <property type="match status" value="1"/>
</dbReference>
<dbReference type="PROSITE" id="PS00586">
    <property type="entry name" value="RIBOSOMAL_L16_1"/>
    <property type="match status" value="1"/>
</dbReference>
<gene>
    <name evidence="1" type="primary">rplP</name>
    <name type="ordered locus">lpp0401</name>
</gene>
<keyword id="KW-0687">Ribonucleoprotein</keyword>
<keyword id="KW-0689">Ribosomal protein</keyword>
<keyword id="KW-0694">RNA-binding</keyword>
<keyword id="KW-0699">rRNA-binding</keyword>
<keyword id="KW-0820">tRNA-binding</keyword>
<feature type="chain" id="PRO_0000062124" description="Large ribosomal subunit protein uL16">
    <location>
        <begin position="1"/>
        <end position="137"/>
    </location>
</feature>
<name>RL16_LEGPA</name>
<proteinExistence type="inferred from homology"/>
<evidence type="ECO:0000255" key="1">
    <source>
        <dbReference type="HAMAP-Rule" id="MF_01342"/>
    </source>
</evidence>
<evidence type="ECO:0000305" key="2"/>
<comment type="function">
    <text evidence="1">Binds 23S rRNA and is also seen to make contacts with the A and possibly P site tRNAs.</text>
</comment>
<comment type="subunit">
    <text evidence="1">Part of the 50S ribosomal subunit.</text>
</comment>
<comment type="similarity">
    <text evidence="1">Belongs to the universal ribosomal protein uL16 family.</text>
</comment>
<organism>
    <name type="scientific">Legionella pneumophila (strain Paris)</name>
    <dbReference type="NCBI Taxonomy" id="297246"/>
    <lineage>
        <taxon>Bacteria</taxon>
        <taxon>Pseudomonadati</taxon>
        <taxon>Pseudomonadota</taxon>
        <taxon>Gammaproteobacteria</taxon>
        <taxon>Legionellales</taxon>
        <taxon>Legionellaceae</taxon>
        <taxon>Legionella</taxon>
    </lineage>
</organism>
<reference key="1">
    <citation type="journal article" date="2004" name="Nat. Genet.">
        <title>Evidence in the Legionella pneumophila genome for exploitation of host cell functions and high genome plasticity.</title>
        <authorList>
            <person name="Cazalet C."/>
            <person name="Rusniok C."/>
            <person name="Brueggemann H."/>
            <person name="Zidane N."/>
            <person name="Magnier A."/>
            <person name="Ma L."/>
            <person name="Tichit M."/>
            <person name="Jarraud S."/>
            <person name="Bouchier C."/>
            <person name="Vandenesch F."/>
            <person name="Kunst F."/>
            <person name="Etienne J."/>
            <person name="Glaser P."/>
            <person name="Buchrieser C."/>
        </authorList>
    </citation>
    <scope>NUCLEOTIDE SEQUENCE [LARGE SCALE GENOMIC DNA]</scope>
    <source>
        <strain>Paris</strain>
    </source>
</reference>
<protein>
    <recommendedName>
        <fullName evidence="1">Large ribosomal subunit protein uL16</fullName>
    </recommendedName>
    <alternativeName>
        <fullName evidence="2">50S ribosomal protein L16</fullName>
    </alternativeName>
</protein>
<sequence length="137" mass="15762">MLQPKRTKYRKQMKGRNRGLALRGSKISFGEFGLKAVERGRLTARQIEAARRAMTRHIKRGGKIWIRVFPDKPITQKPLEVRQGKGKGSVEYWVAQIQPGKVLFEMEGVSKELAMEAFDLAKAKLPFKVMFEERTVM</sequence>